<dbReference type="EMBL" id="DQ923116">
    <property type="protein sequence ID" value="ABI49766.1"/>
    <property type="molecule type" value="Genomic_DNA"/>
</dbReference>
<dbReference type="RefSeq" id="YP_740553.1">
    <property type="nucleotide sequence ID" value="NC_008335.1"/>
</dbReference>
<dbReference type="SMR" id="Q09G58"/>
<dbReference type="GeneID" id="4271285"/>
<dbReference type="GO" id="GO:0009535">
    <property type="term" value="C:chloroplast thylakoid membrane"/>
    <property type="evidence" value="ECO:0007669"/>
    <property type="project" value="UniProtKB-SubCell"/>
</dbReference>
<dbReference type="GO" id="GO:0005886">
    <property type="term" value="C:plasma membrane"/>
    <property type="evidence" value="ECO:0007669"/>
    <property type="project" value="UniProtKB-UniRule"/>
</dbReference>
<dbReference type="GO" id="GO:0045259">
    <property type="term" value="C:proton-transporting ATP synthase complex"/>
    <property type="evidence" value="ECO:0007669"/>
    <property type="project" value="UniProtKB-KW"/>
</dbReference>
<dbReference type="GO" id="GO:0046933">
    <property type="term" value="F:proton-transporting ATP synthase activity, rotational mechanism"/>
    <property type="evidence" value="ECO:0007669"/>
    <property type="project" value="UniProtKB-UniRule"/>
</dbReference>
<dbReference type="CDD" id="cd00310">
    <property type="entry name" value="ATP-synt_Fo_a_6"/>
    <property type="match status" value="1"/>
</dbReference>
<dbReference type="FunFam" id="1.20.120.220:FF:000001">
    <property type="entry name" value="ATP synthase subunit a, chloroplastic"/>
    <property type="match status" value="1"/>
</dbReference>
<dbReference type="Gene3D" id="1.20.120.220">
    <property type="entry name" value="ATP synthase, F0 complex, subunit A"/>
    <property type="match status" value="1"/>
</dbReference>
<dbReference type="HAMAP" id="MF_01393">
    <property type="entry name" value="ATP_synth_a_bact"/>
    <property type="match status" value="1"/>
</dbReference>
<dbReference type="InterPro" id="IPR045082">
    <property type="entry name" value="ATP_syn_F0_a_bact/chloroplast"/>
</dbReference>
<dbReference type="InterPro" id="IPR000568">
    <property type="entry name" value="ATP_synth_F0_asu"/>
</dbReference>
<dbReference type="InterPro" id="IPR023011">
    <property type="entry name" value="ATP_synth_F0_asu_AS"/>
</dbReference>
<dbReference type="InterPro" id="IPR035908">
    <property type="entry name" value="F0_ATP_A_sf"/>
</dbReference>
<dbReference type="NCBIfam" id="TIGR01131">
    <property type="entry name" value="ATP_synt_6_or_A"/>
    <property type="match status" value="1"/>
</dbReference>
<dbReference type="PANTHER" id="PTHR42823">
    <property type="entry name" value="ATP SYNTHASE SUBUNIT A, CHLOROPLASTIC"/>
    <property type="match status" value="1"/>
</dbReference>
<dbReference type="PANTHER" id="PTHR42823:SF3">
    <property type="entry name" value="ATP SYNTHASE SUBUNIT A, CHLOROPLASTIC"/>
    <property type="match status" value="1"/>
</dbReference>
<dbReference type="Pfam" id="PF00119">
    <property type="entry name" value="ATP-synt_A"/>
    <property type="match status" value="1"/>
</dbReference>
<dbReference type="PRINTS" id="PR00123">
    <property type="entry name" value="ATPASEA"/>
</dbReference>
<dbReference type="SUPFAM" id="SSF81336">
    <property type="entry name" value="F1F0 ATP synthase subunit A"/>
    <property type="match status" value="1"/>
</dbReference>
<dbReference type="PROSITE" id="PS00449">
    <property type="entry name" value="ATPASE_A"/>
    <property type="match status" value="1"/>
</dbReference>
<accession>Q09G58</accession>
<gene>
    <name evidence="1" type="primary">atpI</name>
</gene>
<proteinExistence type="inferred from homology"/>
<feature type="chain" id="PRO_0000362592" description="ATP synthase subunit a, chloroplastic">
    <location>
        <begin position="1"/>
        <end position="247"/>
    </location>
</feature>
<feature type="transmembrane region" description="Helical" evidence="1">
    <location>
        <begin position="38"/>
        <end position="58"/>
    </location>
</feature>
<feature type="transmembrane region" description="Helical" evidence="1">
    <location>
        <begin position="95"/>
        <end position="115"/>
    </location>
</feature>
<feature type="transmembrane region" description="Helical" evidence="1">
    <location>
        <begin position="134"/>
        <end position="154"/>
    </location>
</feature>
<feature type="transmembrane region" description="Helical" evidence="1">
    <location>
        <begin position="199"/>
        <end position="219"/>
    </location>
</feature>
<feature type="transmembrane region" description="Helical" evidence="1">
    <location>
        <begin position="220"/>
        <end position="240"/>
    </location>
</feature>
<comment type="function">
    <text evidence="1">Key component of the proton channel; it plays a direct role in the translocation of protons across the membrane.</text>
</comment>
<comment type="subunit">
    <text evidence="1">F-type ATPases have 2 components, CF(1) - the catalytic core - and CF(0) - the membrane proton channel. CF(1) has five subunits: alpha(3), beta(3), gamma(1), delta(1), epsilon(1). CF(0) has four main subunits: a, b, b' and c.</text>
</comment>
<comment type="subcellular location">
    <subcellularLocation>
        <location evidence="1">Plastid</location>
        <location evidence="1">Chloroplast thylakoid membrane</location>
        <topology evidence="1">Multi-pass membrane protein</topology>
    </subcellularLocation>
</comment>
<comment type="similarity">
    <text evidence="1">Belongs to the ATPase A chain family.</text>
</comment>
<protein>
    <recommendedName>
        <fullName evidence="1">ATP synthase subunit a, chloroplastic</fullName>
    </recommendedName>
    <alternativeName>
        <fullName evidence="1">ATP synthase F0 sector subunit a</fullName>
    </alternativeName>
    <alternativeName>
        <fullName evidence="1">F-ATPase subunit IV</fullName>
    </alternativeName>
</protein>
<keyword id="KW-0066">ATP synthesis</keyword>
<keyword id="KW-0138">CF(0)</keyword>
<keyword id="KW-0150">Chloroplast</keyword>
<keyword id="KW-0375">Hydrogen ion transport</keyword>
<keyword id="KW-0406">Ion transport</keyword>
<keyword id="KW-0472">Membrane</keyword>
<keyword id="KW-0934">Plastid</keyword>
<keyword id="KW-0793">Thylakoid</keyword>
<keyword id="KW-0812">Transmembrane</keyword>
<keyword id="KW-1133">Transmembrane helix</keyword>
<keyword id="KW-0813">Transport</keyword>
<geneLocation type="chloroplast"/>
<organism>
    <name type="scientific">Platanus occidentalis</name>
    <name type="common">Sycamore</name>
    <name type="synonym">American plane tree</name>
    <dbReference type="NCBI Taxonomy" id="4403"/>
    <lineage>
        <taxon>Eukaryota</taxon>
        <taxon>Viridiplantae</taxon>
        <taxon>Streptophyta</taxon>
        <taxon>Embryophyta</taxon>
        <taxon>Tracheophyta</taxon>
        <taxon>Spermatophyta</taxon>
        <taxon>Magnoliopsida</taxon>
        <taxon>Proteales</taxon>
        <taxon>Platanaceae</taxon>
        <taxon>Platanus</taxon>
    </lineage>
</organism>
<reference key="1">
    <citation type="journal article" date="2006" name="BMC Plant Biol.">
        <title>Rapid and accurate pyrosequencing of angiosperm plastid genomes.</title>
        <authorList>
            <person name="Moore M.J."/>
            <person name="Dhingra A."/>
            <person name="Soltis P.S."/>
            <person name="Shaw R."/>
            <person name="Farmerie W.G."/>
            <person name="Folta K.M."/>
            <person name="Soltis D.E."/>
        </authorList>
    </citation>
    <scope>NUCLEOTIDE SEQUENCE [LARGE SCALE GENOMIC DNA]</scope>
</reference>
<name>ATPI_PLAOC</name>
<evidence type="ECO:0000255" key="1">
    <source>
        <dbReference type="HAMAP-Rule" id="MF_01393"/>
    </source>
</evidence>
<sequence length="247" mass="27077">MNVLPCSINTLKGLYDISGVEVGQHFYWQIGGFQVHAQVLITSWVVIAILLGSATVAVRNPQTIPTDGQNFFEYVLEFIRDLSKTQIGEEYGPWVPFIGTMFLFIFVSNWSGALLPWKIIQLPHGELAAPTNDINTTVALALPTSVAYFYAGLTKKGLGYFGKYIQPTPILLPINILEDFTKPLSLSFRLFGNILADELVVVVLVSLVPSVVPIPVMFLGLFTSGIQALIFATLAAAYIGESMEGHH</sequence>